<proteinExistence type="inferred from homology"/>
<dbReference type="EMBL" id="X54215">
    <property type="protein sequence ID" value="CAA38129.1"/>
    <property type="molecule type" value="Genomic_DNA"/>
</dbReference>
<dbReference type="PIR" id="S11790">
    <property type="entry name" value="S11790"/>
</dbReference>
<dbReference type="RefSeq" id="WP_004677763.1">
    <property type="nucleotide sequence ID" value="NZ_WNKD01000039.1"/>
</dbReference>
<dbReference type="SMR" id="P23720"/>
<dbReference type="GeneID" id="45960661"/>
<dbReference type="GO" id="GO:0003677">
    <property type="term" value="F:DNA binding"/>
    <property type="evidence" value="ECO:0007669"/>
    <property type="project" value="UniProtKB-KW"/>
</dbReference>
<dbReference type="GO" id="GO:0003700">
    <property type="term" value="F:DNA-binding transcription factor activity"/>
    <property type="evidence" value="ECO:0007669"/>
    <property type="project" value="InterPro"/>
</dbReference>
<dbReference type="CDD" id="cd08462">
    <property type="entry name" value="PBP2_NodD"/>
    <property type="match status" value="1"/>
</dbReference>
<dbReference type="Gene3D" id="3.40.190.10">
    <property type="entry name" value="Periplasmic binding protein-like II"/>
    <property type="match status" value="2"/>
</dbReference>
<dbReference type="Gene3D" id="1.10.10.10">
    <property type="entry name" value="Winged helix-like DNA-binding domain superfamily/Winged helix DNA-binding domain"/>
    <property type="match status" value="1"/>
</dbReference>
<dbReference type="InterPro" id="IPR050389">
    <property type="entry name" value="LysR-type_TF"/>
</dbReference>
<dbReference type="InterPro" id="IPR005119">
    <property type="entry name" value="LysR_subst-bd"/>
</dbReference>
<dbReference type="InterPro" id="IPR037416">
    <property type="entry name" value="NodD_PBP2"/>
</dbReference>
<dbReference type="InterPro" id="IPR000847">
    <property type="entry name" value="Tscrpt_reg_HTH_LysR"/>
</dbReference>
<dbReference type="InterPro" id="IPR036388">
    <property type="entry name" value="WH-like_DNA-bd_sf"/>
</dbReference>
<dbReference type="InterPro" id="IPR036390">
    <property type="entry name" value="WH_DNA-bd_sf"/>
</dbReference>
<dbReference type="PANTHER" id="PTHR30118:SF6">
    <property type="entry name" value="HTH-TYPE TRANSCRIPTIONAL REGULATOR LEUO"/>
    <property type="match status" value="1"/>
</dbReference>
<dbReference type="PANTHER" id="PTHR30118">
    <property type="entry name" value="HTH-TYPE TRANSCRIPTIONAL REGULATOR LEUO-RELATED"/>
    <property type="match status" value="1"/>
</dbReference>
<dbReference type="Pfam" id="PF00126">
    <property type="entry name" value="HTH_1"/>
    <property type="match status" value="1"/>
</dbReference>
<dbReference type="Pfam" id="PF03466">
    <property type="entry name" value="LysR_substrate"/>
    <property type="match status" value="1"/>
</dbReference>
<dbReference type="PRINTS" id="PR00039">
    <property type="entry name" value="HTHLYSR"/>
</dbReference>
<dbReference type="SUPFAM" id="SSF53850">
    <property type="entry name" value="Periplasmic binding protein-like II"/>
    <property type="match status" value="1"/>
</dbReference>
<dbReference type="SUPFAM" id="SSF46785">
    <property type="entry name" value="Winged helix' DNA-binding domain"/>
    <property type="match status" value="1"/>
</dbReference>
<dbReference type="PROSITE" id="PS50931">
    <property type="entry name" value="HTH_LYSR"/>
    <property type="match status" value="1"/>
</dbReference>
<evidence type="ECO:0000255" key="1">
    <source>
        <dbReference type="PROSITE-ProRule" id="PRU00253"/>
    </source>
</evidence>
<evidence type="ECO:0000305" key="2"/>
<gene>
    <name type="primary">nodD3</name>
</gene>
<accession>P23720</accession>
<comment type="function">
    <text>NodD regulates the expression of the nodABCFE genes which encode other nodulation proteins. NodD is also a negative regulator of its own expression. Binds flavonoids as inducers.</text>
</comment>
<comment type="similarity">
    <text evidence="2">Belongs to the LysR transcriptional regulatory family.</text>
</comment>
<keyword id="KW-0010">Activator</keyword>
<keyword id="KW-0238">DNA-binding</keyword>
<keyword id="KW-0536">Nodulation</keyword>
<keyword id="KW-0614">Plasmid</keyword>
<keyword id="KW-0678">Repressor</keyword>
<keyword id="KW-0804">Transcription</keyword>
<keyword id="KW-0805">Transcription regulation</keyword>
<feature type="chain" id="PRO_0000105714" description="Nodulation protein D 3">
    <location>
        <begin position="1"/>
        <end position="302"/>
    </location>
</feature>
<feature type="domain" description="HTH lysR-type" evidence="1">
    <location>
        <begin position="6"/>
        <end position="63"/>
    </location>
</feature>
<feature type="DNA-binding region" description="H-T-H motif" evidence="1">
    <location>
        <begin position="23"/>
        <end position="42"/>
    </location>
</feature>
<protein>
    <recommendedName>
        <fullName>Nodulation protein D 3</fullName>
    </recommendedName>
</protein>
<reference key="1">
    <citation type="journal article" date="1990" name="Mol. Microbiol.">
        <title>Analysis of three nodD genes in Rhizobium leguminosarum biovar phaseoli; nodD1 is preceded by noIE, a gene whose product is secreted from the cytoplasm.</title>
        <authorList>
            <person name="Davis E.O."/>
            <person name="Johnston A.W.B."/>
        </authorList>
    </citation>
    <scope>NUCLEOTIDE SEQUENCE [GENOMIC DNA]</scope>
    <source>
        <strain>8002</strain>
    </source>
</reference>
<organism>
    <name type="scientific">Rhizobium leguminosarum bv. phaseoli</name>
    <dbReference type="NCBI Taxonomy" id="385"/>
    <lineage>
        <taxon>Bacteria</taxon>
        <taxon>Pseudomonadati</taxon>
        <taxon>Pseudomonadota</taxon>
        <taxon>Alphaproteobacteria</taxon>
        <taxon>Hyphomicrobiales</taxon>
        <taxon>Rhizobiaceae</taxon>
        <taxon>Rhizobium/Agrobacterium group</taxon>
        <taxon>Rhizobium</taxon>
    </lineage>
</organism>
<name>NODD3_RHILP</name>
<geneLocation type="plasmid">
    <name>sym</name>
</geneLocation>
<sequence length="302" mass="34275">MRFKGLDLNLLVALDALMIERNLTAAARSINLSQPAMSAAVRRLRSYFRDELFTMRGREFVPTPRAEDLAPAIREALQHIRLNIIPWDKFTPDQSDRHFRVSLCDFVTVVLFQKILERLAREAPGISFDLLPLTDNPDELLRRGDVDFLISPPLFMSSAHPKIDLFQERLTCVGCSNNKQLEEALTAEEYSSMGHAVVRFGRTQQPTIEDCFLQEHGLKRRVEVVVSSFSMIPAALMGTDRIATVPLRLVGLFEDTIPLRMTAPPIALPTFTEAVQWPVLHDKDPANIWMRDIMVQEAARLP</sequence>